<proteinExistence type="evidence at protein level"/>
<comment type="function">
    <text evidence="1 5 14">Cytochrome P450 monooxygenase, part of the gene cluster that mediates the biosynthesis of melleolides, a range of antifungal and phytotoxic polyketide derivatives composed of an orsellinic acid (OA) moiety esterified to various sesquiterpene alcohols (Probable). The first step in melleolides biosynthesis is performed by the delta(6)-protoilludene synthase PRO1 which catalyzes the cyclization of farnesyl diphosphate to protoilludene (PubMed:21148562). The orsellinic acid synthase armB produces OA by condensing acetyl-CoA with 3 malonyl-CoA units in a three-round chain elongation reaction folowed by a C2-C7 ring closure (By similarity). ArmB further catalyzes the trans-esterification of OA to the various sesquiterpene alcohols resulting from the hydroxylation of protoilludene (By similarity). The melleolides cluster also includes 5 cytochrome P450 monooxygenases, 4 NAD(+)-dependent oxidoreductases, one flavin-dependent oxidoreductase, and one O-methyltransferase (By similarity). The cytochrome P450 monooxygenases may be involved in protoilludene hydroxylation to elaborate melleolides with multiple alcohol groups, such as melleolide D, which carries alcohol functionalities at C-4, C-5, C-10, and C-13 (By similarity). The role of the NAD(+)-dependent enzymes remains unknown (By similarity). Numerous melleolides, including arnamial, show 5'-O-methylation of the aromatic moiety which may be catalyzed by the methyltransferase encoded in the cluster (By similarity). The flavin-dependent oxidoreductase might represent the dehydrogenase yielding the aldehyde in position 1 of arnamial and other melleolides (By similarity). Finally, several halogenase localized outside of the cluster, are able to catalyze the transfer of a single chlorine atom to the melleolide backbone, resulting in a 6'-chloromelleolide product (By similarity).</text>
</comment>
<comment type="cofactor">
    <cofactor evidence="2">
        <name>heme</name>
        <dbReference type="ChEBI" id="CHEBI:30413"/>
    </cofactor>
</comment>
<comment type="pathway">
    <text evidence="14">Secondary metabolite biosynthesis.</text>
</comment>
<comment type="subcellular location">
    <subcellularLocation>
        <location evidence="3">Membrane</location>
        <topology evidence="3">Single-pass membrane protein</topology>
    </subcellularLocation>
</comment>
<comment type="biotechnology">
    <text evidence="6 7 8 9 10 12">Melleolide sesquiterpene aryl esters are cytotoxic secondary products with anti-cancer potential (PubMed:21376582, PubMed:26952552). Armillaridin shows therapeutic and radiosensitizing effects on human esophageal cancer cells (PubMed:23864890). Armillaridin induces autophagy-associated cell death in human chronic myelogenous leukemia as well as of hepatocellular carcinoma cells (PubMed:27592257, PubMed:31488037). Armillaridin can also inhibit the differentiation and activation of human macrophages and thus might have potential to be developed as a biological response modifier for inflammatory diseases (PubMed:25746621).</text>
</comment>
<comment type="miscellaneous">
    <text evidence="11 13 15">Armillaria species are both devastating forest pathogens and some of the largest and oldest terrestrial organisms on Earth (Probable) (PubMed:31746694). They forage for hosts and achieve immense colony sizes via rhizomorphs, root-like multicellular structures of clonal dispersal (Probable). One genetic Armillaria gallica individual localized in Michigan's Upper Peninsula stands out as exceptionally large, covering hundreds of tree root systems over approximately 75 hectares of the forest floor (PubMed:30963893). Based on observed growth rates of the fungus, the minimum age of this large individual can be estimated as 2500 years (PubMed:30963893).</text>
</comment>
<comment type="similarity">
    <text evidence="14">Belongs to the cytochrome P450 family.</text>
</comment>
<name>ARMP4_ARMGA</name>
<protein>
    <recommendedName>
        <fullName>Cytochrome P450 monooxygenase ARMGADRAFT_1018417</fullName>
        <ecNumber>1.-.-.-</ecNumber>
    </recommendedName>
    <alternativeName>
        <fullName>Melleolide biosynthesis cluster protein ARMGADRAFT_1018417</fullName>
    </alternativeName>
</protein>
<gene>
    <name type="ORF">ARMGADRAFT_1018417</name>
</gene>
<sequence>MALFSAYALAFSLLMIPLILYILRIGRRESGLPPGPSTLPLVGNLHQLPHGGLHLQFTAWAKEFGGIFSLKFGPGTVIVATSPRAVRELIDQKSASTSDRPPSHFSNVITGGNNIGFARYSDYWRRGRRVMHSMLTKKACVNHLTIQRAEASQLMYDYLVEPKEFVAHGQRYANSVITSILAGTRSPHHTSPLVTAFFQMQHEWTHLLTPGAHPPVDMVPFLKYIPGSWKQICAKMKVSQEELYGGMIDACAKRVERGIRNGCFLEGELENKDVDRGLLRGMCSALMEGGSDSTSIYLQSFILMLVAHPEVQAKARAEIDSVVGLDRLPDIEDMDNLPYVSAVIKEVLRLRPITALGAPHYSTQPEVVDGYVIPKNSMIFMNQWGMLHDPDSYDQPESFMPERFLTSPFGTKPGADDTGRSKDIYFGGGRRICVGMHFGQNSLAITSMYLIWAFNLTNAIDPQTKNPIPVDINEYDISLNTIPKPFKCDFQVRSEEHKRMVENAFAEARQVFAPFEQD</sequence>
<evidence type="ECO:0000250" key="1">
    <source>
        <dbReference type="UniProtKB" id="I3ZNU9"/>
    </source>
</evidence>
<evidence type="ECO:0000250" key="2">
    <source>
        <dbReference type="UniProtKB" id="P04798"/>
    </source>
</evidence>
<evidence type="ECO:0000255" key="3"/>
<evidence type="ECO:0000255" key="4">
    <source>
        <dbReference type="PROSITE-ProRule" id="PRU00498"/>
    </source>
</evidence>
<evidence type="ECO:0000269" key="5">
    <source>
    </source>
</evidence>
<evidence type="ECO:0000269" key="6">
    <source>
    </source>
</evidence>
<evidence type="ECO:0000269" key="7">
    <source>
    </source>
</evidence>
<evidence type="ECO:0000269" key="8">
    <source>
    </source>
</evidence>
<evidence type="ECO:0000269" key="9">
    <source>
    </source>
</evidence>
<evidence type="ECO:0000269" key="10">
    <source>
    </source>
</evidence>
<evidence type="ECO:0000269" key="11">
    <source>
    </source>
</evidence>
<evidence type="ECO:0000269" key="12">
    <source>
    </source>
</evidence>
<evidence type="ECO:0000269" key="13">
    <source>
    </source>
</evidence>
<evidence type="ECO:0000305" key="14"/>
<evidence type="ECO:0000305" key="15">
    <source>
    </source>
</evidence>
<accession>A0A2H3CNS9</accession>
<dbReference type="EC" id="1.-.-.-"/>
<dbReference type="EMBL" id="KZ293696">
    <property type="protein sequence ID" value="PBK84739.1"/>
    <property type="molecule type" value="Genomic_DNA"/>
</dbReference>
<dbReference type="SMR" id="A0A2H3CNS9"/>
<dbReference type="STRING" id="47427.A0A2H3CNS9"/>
<dbReference type="InParanoid" id="A0A2H3CNS9"/>
<dbReference type="OMA" id="QIRLGNC"/>
<dbReference type="OrthoDB" id="1103324at2759"/>
<dbReference type="Proteomes" id="UP000217790">
    <property type="component" value="Unassembled WGS sequence"/>
</dbReference>
<dbReference type="GO" id="GO:0016020">
    <property type="term" value="C:membrane"/>
    <property type="evidence" value="ECO:0007669"/>
    <property type="project" value="UniProtKB-SubCell"/>
</dbReference>
<dbReference type="GO" id="GO:0020037">
    <property type="term" value="F:heme binding"/>
    <property type="evidence" value="ECO:0007669"/>
    <property type="project" value="InterPro"/>
</dbReference>
<dbReference type="GO" id="GO:0005506">
    <property type="term" value="F:iron ion binding"/>
    <property type="evidence" value="ECO:0007669"/>
    <property type="project" value="InterPro"/>
</dbReference>
<dbReference type="GO" id="GO:0004497">
    <property type="term" value="F:monooxygenase activity"/>
    <property type="evidence" value="ECO:0007669"/>
    <property type="project" value="UniProtKB-KW"/>
</dbReference>
<dbReference type="GO" id="GO:0016705">
    <property type="term" value="F:oxidoreductase activity, acting on paired donors, with incorporation or reduction of molecular oxygen"/>
    <property type="evidence" value="ECO:0007669"/>
    <property type="project" value="InterPro"/>
</dbReference>
<dbReference type="CDD" id="cd11065">
    <property type="entry name" value="CYP64-like"/>
    <property type="match status" value="1"/>
</dbReference>
<dbReference type="Gene3D" id="1.10.630.10">
    <property type="entry name" value="Cytochrome P450"/>
    <property type="match status" value="1"/>
</dbReference>
<dbReference type="InterPro" id="IPR001128">
    <property type="entry name" value="Cyt_P450"/>
</dbReference>
<dbReference type="InterPro" id="IPR017972">
    <property type="entry name" value="Cyt_P450_CS"/>
</dbReference>
<dbReference type="InterPro" id="IPR002401">
    <property type="entry name" value="Cyt_P450_E_grp-I"/>
</dbReference>
<dbReference type="InterPro" id="IPR036396">
    <property type="entry name" value="Cyt_P450_sf"/>
</dbReference>
<dbReference type="InterPro" id="IPR050364">
    <property type="entry name" value="Cytochrome_P450_fung"/>
</dbReference>
<dbReference type="PANTHER" id="PTHR46300:SF2">
    <property type="entry name" value="CYTOCHROME P450 MONOOXYGENASE ALNH-RELATED"/>
    <property type="match status" value="1"/>
</dbReference>
<dbReference type="PANTHER" id="PTHR46300">
    <property type="entry name" value="P450, PUTATIVE (EUROFUNG)-RELATED-RELATED"/>
    <property type="match status" value="1"/>
</dbReference>
<dbReference type="Pfam" id="PF00067">
    <property type="entry name" value="p450"/>
    <property type="match status" value="1"/>
</dbReference>
<dbReference type="PRINTS" id="PR00463">
    <property type="entry name" value="EP450I"/>
</dbReference>
<dbReference type="PRINTS" id="PR00385">
    <property type="entry name" value="P450"/>
</dbReference>
<dbReference type="SUPFAM" id="SSF48264">
    <property type="entry name" value="Cytochrome P450"/>
    <property type="match status" value="1"/>
</dbReference>
<dbReference type="PROSITE" id="PS00086">
    <property type="entry name" value="CYTOCHROME_P450"/>
    <property type="match status" value="1"/>
</dbReference>
<organism>
    <name type="scientific">Armillaria gallica</name>
    <name type="common">Bulbous honey fungus</name>
    <name type="synonym">Armillaria bulbosa</name>
    <dbReference type="NCBI Taxonomy" id="47427"/>
    <lineage>
        <taxon>Eukaryota</taxon>
        <taxon>Fungi</taxon>
        <taxon>Dikarya</taxon>
        <taxon>Basidiomycota</taxon>
        <taxon>Agaricomycotina</taxon>
        <taxon>Agaricomycetes</taxon>
        <taxon>Agaricomycetidae</taxon>
        <taxon>Agaricales</taxon>
        <taxon>Marasmiineae</taxon>
        <taxon>Physalacriaceae</taxon>
        <taxon>Armillaria</taxon>
    </lineage>
</organism>
<reference key="1">
    <citation type="journal article" date="2017" name="Nat. Ecol. Evol.">
        <title>Genome expansion and lineage-specific genetic innovations in the forest pathogenic fungi Armillaria.</title>
        <authorList>
            <person name="Sipos G."/>
            <person name="Prasanna A.N."/>
            <person name="Walter M.C."/>
            <person name="O'Connor E."/>
            <person name="Balint B."/>
            <person name="Krizsan K."/>
            <person name="Kiss B."/>
            <person name="Hess J."/>
            <person name="Varga T."/>
            <person name="Slot J."/>
            <person name="Riley R."/>
            <person name="Boka B."/>
            <person name="Rigling D."/>
            <person name="Barry K."/>
            <person name="Lee J."/>
            <person name="Mihaltcheva S."/>
            <person name="LaButti K."/>
            <person name="Lipzen A."/>
            <person name="Waldron R."/>
            <person name="Moloney N.M."/>
            <person name="Sperisen C."/>
            <person name="Kredics L."/>
            <person name="Vagvoelgyi C."/>
            <person name="Patrignani A."/>
            <person name="Fitzpatrick D."/>
            <person name="Nagy I."/>
            <person name="Doyle S."/>
            <person name="Anderson J.B."/>
            <person name="Grigoriev I.V."/>
            <person name="Gueldener U."/>
            <person name="Muensterkoetter M."/>
            <person name="Nagy L.G."/>
        </authorList>
    </citation>
    <scope>NUCLEOTIDE SEQUENCE [LARGE SCALE GENOMIC DNA]</scope>
    <source>
        <strain>Ar21-2</strain>
    </source>
</reference>
<reference key="2">
    <citation type="journal article" date="2011" name="Bioorg. Med. Chem. Lett.">
        <title>In vitro cytotoxicity of melleolide antibiotics: structural and mechanistic aspects.</title>
        <authorList>
            <person name="Bohnert M."/>
            <person name="Miethbauer S."/>
            <person name="Dahse H.M."/>
            <person name="Ziemen J."/>
            <person name="Nett M."/>
            <person name="Hoffmeister D."/>
        </authorList>
    </citation>
    <scope>BIOTECHNOLOGY</scope>
</reference>
<reference key="3">
    <citation type="journal article" date="2011" name="J. Biol. Chem.">
        <title>Cloning and characterization of an Armillaria gallica cDNA encoding protoilludene synthase, which catalyzes the first committed step in the synthesis of antimicrobial melleolides.</title>
        <authorList>
            <person name="Engels B."/>
            <person name="Heinig U."/>
            <person name="Grothe T."/>
            <person name="Stadler M."/>
            <person name="Jennewein S."/>
        </authorList>
    </citation>
    <scope>FUNCTION</scope>
    <source>
        <strain>FU02472</strain>
    </source>
</reference>
<reference key="4">
    <citation type="journal article" date="2013" name="Evid. Based Complement Alternat. Med.">
        <title>Therapeutic and radiosensitizing effects of armillaridin on human esophageal cancer cells.</title>
        <authorList>
            <person name="Chi C.W."/>
            <person name="Chen C.C."/>
            <person name="Chen Y.J."/>
        </authorList>
    </citation>
    <scope>BIOTECHNOLOGY</scope>
</reference>
<reference key="5">
    <citation type="journal article" date="2015" name="Int. J. Med. Mushrooms">
        <title>Armillaridin, a honey medicinal mushroom, Armillaria mellea (higher basidiomycetes) component, inhibits differentiation and activation of human macrophages.</title>
        <authorList>
            <person name="Liu T.P."/>
            <person name="Chen C.C."/>
            <person name="Shiao P.Y."/>
            <person name="Shieh H.R."/>
            <person name="Chen Y.Y."/>
            <person name="Chen Y.J."/>
        </authorList>
    </citation>
    <scope>BIOTECHNOLOGY</scope>
</reference>
<reference key="6">
    <citation type="journal article" date="2016" name="J. Ethnopharmacol.">
        <title>Structure, cytotoxic activity and mechanism of protoilludane sesquiterpene aryl esters from the mycelium of Armillaria mellea.</title>
        <authorList>
            <person name="Li Z."/>
            <person name="Wang Y."/>
            <person name="Jiang B."/>
            <person name="Li W."/>
            <person name="Zheng L."/>
            <person name="Yang X."/>
            <person name="Bao Y."/>
            <person name="Sun L."/>
            <person name="Huang Y."/>
            <person name="Li Y."/>
        </authorList>
    </citation>
    <scope>BIOTECHNOLOGY</scope>
</reference>
<reference key="7">
    <citation type="journal article" date="2016" name="Tumor Biol.">
        <title>Armillaridin induces autophagy-associated cell death in human chronic myelogenous leukemia K562 cells.</title>
        <authorList>
            <person name="Chang W.H."/>
            <person name="Huang H.L."/>
            <person name="Huang W.P."/>
            <person name="Chen C.C."/>
            <person name="Chen Y.J."/>
        </authorList>
    </citation>
    <scope>BIOTECHNOLOGY</scope>
</reference>
<reference key="8">
    <citation type="journal article" date="2018" name="Curr. Biol.">
        <title>Armillaria.</title>
        <authorList>
            <person name="Sipos G."/>
            <person name="Anderson J.B."/>
            <person name="Nagy L.G."/>
        </authorList>
    </citation>
    <scope>MISCELLANEOUS</scope>
</reference>
<reference key="9">
    <citation type="journal article" date="2018" name="Proc. R. Soc. B">
        <title>Clonal evolution and genome stability in a 2500-year-old fungal individual.</title>
        <authorList>
            <person name="Anderson J.B."/>
            <person name="Bruhn J.N."/>
            <person name="Kasimer D."/>
            <person name="Wang H."/>
            <person name="Rodrigue N."/>
            <person name="Smith M.L."/>
        </authorList>
    </citation>
    <scope>MISCELLANEOUS</scope>
</reference>
<reference key="10">
    <citation type="journal article" date="2019" name="Am. J. Chin. Med.">
        <title>Induction of autophagic death of human hepatocellular carcinoma cells by armillaridin from Armillaria mellea.</title>
        <authorList>
            <person name="Leu Y.S."/>
            <person name="Chen Y.J."/>
            <person name="Chen C.C."/>
            <person name="Huang H.L."/>
        </authorList>
    </citation>
    <scope>BIOTECHNOLOGY</scope>
</reference>
<reference key="11">
    <citation type="journal article" date="2020" name="Plant Dis.">
        <title>Susceptibility of garden trees and shrubs to Armillaria root rot.</title>
        <authorList>
            <person name="Cromey M.G."/>
            <person name="Drakulic J."/>
            <person name="Beal E.J."/>
            <person name="Waghorn I.A.G."/>
            <person name="Perry J.N."/>
            <person name="Clover G.R.G."/>
        </authorList>
    </citation>
    <scope>MISCELLANEOUS</scope>
</reference>
<feature type="chain" id="PRO_0000449411" description="Cytochrome P450 monooxygenase ARMGADRAFT_1018417">
    <location>
        <begin position="1"/>
        <end position="518"/>
    </location>
</feature>
<feature type="transmembrane region" description="Helical" evidence="3">
    <location>
        <begin position="3"/>
        <end position="23"/>
    </location>
</feature>
<feature type="binding site" description="axial binding residue" evidence="2">
    <location>
        <position position="433"/>
    </location>
    <ligand>
        <name>heme</name>
        <dbReference type="ChEBI" id="CHEBI:30413"/>
    </ligand>
    <ligandPart>
        <name>Fe</name>
        <dbReference type="ChEBI" id="CHEBI:18248"/>
    </ligandPart>
</feature>
<feature type="glycosylation site" description="N-linked (GlcNAc...) asparagine" evidence="4">
    <location>
        <position position="455"/>
    </location>
</feature>
<keyword id="KW-0325">Glycoprotein</keyword>
<keyword id="KW-0349">Heme</keyword>
<keyword id="KW-0408">Iron</keyword>
<keyword id="KW-0472">Membrane</keyword>
<keyword id="KW-0479">Metal-binding</keyword>
<keyword id="KW-0503">Monooxygenase</keyword>
<keyword id="KW-0560">Oxidoreductase</keyword>
<keyword id="KW-1185">Reference proteome</keyword>
<keyword id="KW-0812">Transmembrane</keyword>
<keyword id="KW-1133">Transmembrane helix</keyword>